<keyword id="KW-0997">Cell inner membrane</keyword>
<keyword id="KW-1003">Cell membrane</keyword>
<keyword id="KW-0407">Ion channel</keyword>
<keyword id="KW-0406">Ion transport</keyword>
<keyword id="KW-0472">Membrane</keyword>
<keyword id="KW-0479">Metal-binding</keyword>
<keyword id="KW-1185">Reference proteome</keyword>
<keyword id="KW-0915">Sodium</keyword>
<keyword id="KW-0812">Transmembrane</keyword>
<keyword id="KW-1133">Transmembrane helix</keyword>
<keyword id="KW-0813">Transport</keyword>
<evidence type="ECO:0000255" key="1">
    <source>
        <dbReference type="HAMAP-Rule" id="MF_00454"/>
    </source>
</evidence>
<comment type="function">
    <text evidence="1">Fluoride-specific ion channel. Important for reducing fluoride concentration in the cell, thus reducing its toxicity.</text>
</comment>
<comment type="catalytic activity">
    <reaction evidence="1">
        <text>fluoride(in) = fluoride(out)</text>
        <dbReference type="Rhea" id="RHEA:76159"/>
        <dbReference type="ChEBI" id="CHEBI:17051"/>
    </reaction>
    <physiologicalReaction direction="left-to-right" evidence="1">
        <dbReference type="Rhea" id="RHEA:76160"/>
    </physiologicalReaction>
</comment>
<comment type="activity regulation">
    <text evidence="1">Na(+) is not transported, but it plays an essential structural role and its presence is essential for fluoride channel function.</text>
</comment>
<comment type="subcellular location">
    <subcellularLocation>
        <location evidence="1">Cell inner membrane</location>
        <topology evidence="1">Multi-pass membrane protein</topology>
    </subcellularLocation>
</comment>
<comment type="similarity">
    <text evidence="1">Belongs to the fluoride channel Fluc/FEX (TC 1.A.43) family.</text>
</comment>
<dbReference type="EMBL" id="CP001032">
    <property type="protein sequence ID" value="ACB77818.1"/>
    <property type="molecule type" value="Genomic_DNA"/>
</dbReference>
<dbReference type="RefSeq" id="WP_012377332.1">
    <property type="nucleotide sequence ID" value="NC_010571.1"/>
</dbReference>
<dbReference type="SMR" id="B1ZQR7"/>
<dbReference type="STRING" id="452637.Oter_4547"/>
<dbReference type="KEGG" id="ote:Oter_4547"/>
<dbReference type="eggNOG" id="COG0239">
    <property type="taxonomic scope" value="Bacteria"/>
</dbReference>
<dbReference type="HOGENOM" id="CLU_114342_3_0_0"/>
<dbReference type="OrthoDB" id="9815830at2"/>
<dbReference type="Proteomes" id="UP000007013">
    <property type="component" value="Chromosome"/>
</dbReference>
<dbReference type="GO" id="GO:0005886">
    <property type="term" value="C:plasma membrane"/>
    <property type="evidence" value="ECO:0007669"/>
    <property type="project" value="UniProtKB-SubCell"/>
</dbReference>
<dbReference type="GO" id="GO:0062054">
    <property type="term" value="F:fluoride channel activity"/>
    <property type="evidence" value="ECO:0007669"/>
    <property type="project" value="UniProtKB-UniRule"/>
</dbReference>
<dbReference type="GO" id="GO:0046872">
    <property type="term" value="F:metal ion binding"/>
    <property type="evidence" value="ECO:0007669"/>
    <property type="project" value="UniProtKB-KW"/>
</dbReference>
<dbReference type="GO" id="GO:0140114">
    <property type="term" value="P:cellular detoxification of fluoride"/>
    <property type="evidence" value="ECO:0007669"/>
    <property type="project" value="UniProtKB-UniRule"/>
</dbReference>
<dbReference type="HAMAP" id="MF_00454">
    <property type="entry name" value="FluC"/>
    <property type="match status" value="1"/>
</dbReference>
<dbReference type="InterPro" id="IPR003691">
    <property type="entry name" value="FluC"/>
</dbReference>
<dbReference type="NCBIfam" id="TIGR00494">
    <property type="entry name" value="crcB"/>
    <property type="match status" value="1"/>
</dbReference>
<dbReference type="NCBIfam" id="NF010802">
    <property type="entry name" value="PRK14206.1"/>
    <property type="match status" value="1"/>
</dbReference>
<dbReference type="PANTHER" id="PTHR28259">
    <property type="entry name" value="FLUORIDE EXPORT PROTEIN 1-RELATED"/>
    <property type="match status" value="1"/>
</dbReference>
<dbReference type="PANTHER" id="PTHR28259:SF1">
    <property type="entry name" value="FLUORIDE EXPORT PROTEIN 1-RELATED"/>
    <property type="match status" value="1"/>
</dbReference>
<dbReference type="Pfam" id="PF02537">
    <property type="entry name" value="CRCB"/>
    <property type="match status" value="1"/>
</dbReference>
<gene>
    <name evidence="1" type="primary">fluC</name>
    <name evidence="1" type="synonym">crcB</name>
    <name type="ordered locus">Oter_4547</name>
</gene>
<sequence length="132" mass="13681">MSLYLYIALGGALGSVGRFALSGLVAQHYGETFPWGTLVVNVVGSFIIGFFATLTAPEGRMLVGATGRHFVMTGVLGGFTTFSSFSLQTLNLLRDGDWGRAGGNVVGSLVLCLVAVWLGHIAAVGLNSLKGS</sequence>
<feature type="chain" id="PRO_1000206256" description="Fluoride-specific ion channel FluC">
    <location>
        <begin position="1"/>
        <end position="132"/>
    </location>
</feature>
<feature type="transmembrane region" description="Helical" evidence="1">
    <location>
        <begin position="5"/>
        <end position="25"/>
    </location>
</feature>
<feature type="transmembrane region" description="Helical" evidence="1">
    <location>
        <begin position="32"/>
        <end position="52"/>
    </location>
</feature>
<feature type="transmembrane region" description="Helical" evidence="1">
    <location>
        <begin position="70"/>
        <end position="90"/>
    </location>
</feature>
<feature type="transmembrane region" description="Helical" evidence="1">
    <location>
        <begin position="105"/>
        <end position="125"/>
    </location>
</feature>
<feature type="binding site" evidence="1">
    <location>
        <position position="77"/>
    </location>
    <ligand>
        <name>Na(+)</name>
        <dbReference type="ChEBI" id="CHEBI:29101"/>
        <note>structural</note>
    </ligand>
</feature>
<feature type="binding site" evidence="1">
    <location>
        <position position="80"/>
    </location>
    <ligand>
        <name>Na(+)</name>
        <dbReference type="ChEBI" id="CHEBI:29101"/>
        <note>structural</note>
    </ligand>
</feature>
<organism>
    <name type="scientific">Opitutus terrae (strain DSM 11246 / JCM 15787 / PB90-1)</name>
    <dbReference type="NCBI Taxonomy" id="452637"/>
    <lineage>
        <taxon>Bacteria</taxon>
        <taxon>Pseudomonadati</taxon>
        <taxon>Verrucomicrobiota</taxon>
        <taxon>Opitutia</taxon>
        <taxon>Opitutales</taxon>
        <taxon>Opitutaceae</taxon>
        <taxon>Opitutus</taxon>
    </lineage>
</organism>
<reference key="1">
    <citation type="journal article" date="2011" name="J. Bacteriol.">
        <title>Genome sequence of the verrucomicrobium Opitutus terrae PB90-1, an abundant inhabitant of rice paddy soil ecosystems.</title>
        <authorList>
            <person name="van Passel M.W."/>
            <person name="Kant R."/>
            <person name="Palva A."/>
            <person name="Copeland A."/>
            <person name="Lucas S."/>
            <person name="Lapidus A."/>
            <person name="Glavina del Rio T."/>
            <person name="Pitluck S."/>
            <person name="Goltsman E."/>
            <person name="Clum A."/>
            <person name="Sun H."/>
            <person name="Schmutz J."/>
            <person name="Larimer F.W."/>
            <person name="Land M.L."/>
            <person name="Hauser L."/>
            <person name="Kyrpides N."/>
            <person name="Mikhailova N."/>
            <person name="Richardson P.P."/>
            <person name="Janssen P.H."/>
            <person name="de Vos W.M."/>
            <person name="Smidt H."/>
        </authorList>
    </citation>
    <scope>NUCLEOTIDE SEQUENCE [LARGE SCALE GENOMIC DNA]</scope>
    <source>
        <strain>DSM 11246 / JCM 15787 / PB90-1</strain>
    </source>
</reference>
<accession>B1ZQR7</accession>
<name>FLUC_OPITP</name>
<protein>
    <recommendedName>
        <fullName evidence="1">Fluoride-specific ion channel FluC</fullName>
    </recommendedName>
</protein>
<proteinExistence type="inferred from homology"/>